<gene>
    <name type="primary">PHLPVI</name>
</gene>
<dbReference type="EMBL" id="Z27082">
    <property type="protein sequence ID" value="CAA81608.1"/>
    <property type="molecule type" value="mRNA"/>
</dbReference>
<dbReference type="PIR" id="S38585">
    <property type="entry name" value="S38585"/>
</dbReference>
<dbReference type="PDB" id="1NLX">
    <property type="method" value="X-ray"/>
    <property type="resolution" value="2.80 A"/>
    <property type="chains" value="A/B/C/D/E/F/G/H/I/J/K/L/M/N=23-132"/>
</dbReference>
<dbReference type="PDB" id="6TRK">
    <property type="method" value="X-ray"/>
    <property type="resolution" value="1.60 A"/>
    <property type="chains" value="A/B=23-132"/>
</dbReference>
<dbReference type="PDBsum" id="1NLX"/>
<dbReference type="PDBsum" id="6TRK"/>
<dbReference type="SMR" id="P43215"/>
<dbReference type="Allergome" id="3420">
    <property type="allergen name" value="Phl p 6.0101"/>
</dbReference>
<dbReference type="Allergome" id="569">
    <property type="allergen name" value="Phl p 6"/>
</dbReference>
<dbReference type="ABCD" id="P43215">
    <property type="antibodies" value="5 sequenced antibodies"/>
</dbReference>
<dbReference type="EvolutionaryTrace" id="P43215"/>
<dbReference type="CDD" id="cd12805">
    <property type="entry name" value="Allergen_V_VI"/>
    <property type="match status" value="1"/>
</dbReference>
<dbReference type="Gene3D" id="1.20.120.320">
    <property type="entry name" value="Group V grass pollen allergen"/>
    <property type="match status" value="1"/>
</dbReference>
<dbReference type="InterPro" id="IPR002914">
    <property type="entry name" value="Poa_pIX/Phl_pVI"/>
</dbReference>
<dbReference type="InterPro" id="IPR035506">
    <property type="entry name" value="Pollen_allergen/Os"/>
</dbReference>
<dbReference type="Pfam" id="PF01620">
    <property type="entry name" value="Pollen_allerg_2"/>
    <property type="match status" value="1"/>
</dbReference>
<dbReference type="PRINTS" id="PR00833">
    <property type="entry name" value="POAALLERGEN"/>
</dbReference>
<dbReference type="SUPFAM" id="SSF81736">
    <property type="entry name" value="Group V grass pollen allergen"/>
    <property type="match status" value="1"/>
</dbReference>
<name>MPAP6_PHLPR</name>
<reference key="1">
    <citation type="journal article" date="1995" name="Int. Arch. Allergy Immunol.">
        <title>Characterization of the allergen group VI in timothy grass pollen (Phl p 6). II. cDNA cloning of Phl p 6 and structural comparison to grass group V.</title>
        <authorList>
            <person name="Petersen A."/>
            <person name="Bufe A."/>
            <person name="Schramm G."/>
            <person name="Schlaak M."/>
            <person name="Becker W."/>
        </authorList>
    </citation>
    <scope>NUCLEOTIDE SEQUENCE [MRNA]</scope>
    <scope>ALLERGEN</scope>
    <source>
        <strain>cv. Agrostideae 24W28-7C</strain>
    </source>
</reference>
<proteinExistence type="evidence at protein level"/>
<evidence type="ECO:0000255" key="1"/>
<evidence type="ECO:0000269" key="2">
    <source>
    </source>
</evidence>
<evidence type="ECO:0000305" key="3"/>
<evidence type="ECO:0007829" key="4">
    <source>
        <dbReference type="PDB" id="6TRK"/>
    </source>
</evidence>
<comment type="allergen">
    <text evidence="2">Causes an allergic reaction in human.</text>
</comment>
<comment type="similarity">
    <text evidence="3">Belongs to the Poa p IX/Phl p VI allergen family.</text>
</comment>
<feature type="signal peptide" evidence="1">
    <location>
        <begin position="1"/>
        <end position="22"/>
    </location>
</feature>
<feature type="chain" id="PRO_0000021750" description="Pollen allergen Phl p 6">
    <location>
        <begin position="23"/>
        <end position="132"/>
    </location>
</feature>
<feature type="helix" evidence="4">
    <location>
        <begin position="24"/>
        <end position="45"/>
    </location>
</feature>
<feature type="turn" evidence="4">
    <location>
        <begin position="46"/>
        <end position="49"/>
    </location>
</feature>
<feature type="helix" evidence="4">
    <location>
        <begin position="52"/>
        <end position="54"/>
    </location>
</feature>
<feature type="helix" evidence="4">
    <location>
        <begin position="55"/>
        <end position="77"/>
    </location>
</feature>
<feature type="helix" evidence="4">
    <location>
        <begin position="79"/>
        <end position="81"/>
    </location>
</feature>
<feature type="helix" evidence="4">
    <location>
        <begin position="82"/>
        <end position="98"/>
    </location>
</feature>
<feature type="helix" evidence="4">
    <location>
        <begin position="101"/>
        <end position="103"/>
    </location>
</feature>
<feature type="helix" evidence="4">
    <location>
        <begin position="104"/>
        <end position="120"/>
    </location>
</feature>
<sequence>MVAMFLAVAVVLGLATSPTAEGGKATTEEQKLIEDVNASFRAAMATTANVPPADKYKTFEAAFTVSSKRNLADAVSKAPQLVPKLDEVYNAAYNAADHAAPEDKYEAFVLHFSEALRIIAGTPEVHAVKPGA</sequence>
<organism>
    <name type="scientific">Phleum pratense</name>
    <name type="common">Common timothy</name>
    <dbReference type="NCBI Taxonomy" id="15957"/>
    <lineage>
        <taxon>Eukaryota</taxon>
        <taxon>Viridiplantae</taxon>
        <taxon>Streptophyta</taxon>
        <taxon>Embryophyta</taxon>
        <taxon>Tracheophyta</taxon>
        <taxon>Spermatophyta</taxon>
        <taxon>Magnoliopsida</taxon>
        <taxon>Liliopsida</taxon>
        <taxon>Poales</taxon>
        <taxon>Poaceae</taxon>
        <taxon>BOP clade</taxon>
        <taxon>Pooideae</taxon>
        <taxon>Poodae</taxon>
        <taxon>Poeae</taxon>
        <taxon>Poeae Chloroplast Group 2 (Poeae type)</taxon>
        <taxon>Poodinae</taxon>
        <taxon>Phleinae</taxon>
        <taxon>Phleum</taxon>
    </lineage>
</organism>
<keyword id="KW-0002">3D-structure</keyword>
<keyword id="KW-0020">Allergen</keyword>
<keyword id="KW-0732">Signal</keyword>
<accession>P43215</accession>
<protein>
    <recommendedName>
        <fullName>Pollen allergen Phl p 6</fullName>
    </recommendedName>
    <alternativeName>
        <fullName>Allergen Phl p VI</fullName>
    </alternativeName>
    <allergenName>Phl p 6</allergenName>
</protein>